<reference key="1">
    <citation type="journal article" date="2007" name="BMC Microbiol.">
        <title>Subtle genetic changes enhance virulence of methicillin resistant and sensitive Staphylococcus aureus.</title>
        <authorList>
            <person name="Highlander S.K."/>
            <person name="Hulten K.G."/>
            <person name="Qin X."/>
            <person name="Jiang H."/>
            <person name="Yerrapragada S."/>
            <person name="Mason E.O. Jr."/>
            <person name="Shang Y."/>
            <person name="Williams T.M."/>
            <person name="Fortunov R.M."/>
            <person name="Liu Y."/>
            <person name="Igboeli O."/>
            <person name="Petrosino J."/>
            <person name="Tirumalai M."/>
            <person name="Uzman A."/>
            <person name="Fox G.E."/>
            <person name="Cardenas A.M."/>
            <person name="Muzny D.M."/>
            <person name="Hemphill L."/>
            <person name="Ding Y."/>
            <person name="Dugan S."/>
            <person name="Blyth P.R."/>
            <person name="Buhay C.J."/>
            <person name="Dinh H.H."/>
            <person name="Hawes A.C."/>
            <person name="Holder M."/>
            <person name="Kovar C.L."/>
            <person name="Lee S.L."/>
            <person name="Liu W."/>
            <person name="Nazareth L.V."/>
            <person name="Wang Q."/>
            <person name="Zhou J."/>
            <person name="Kaplan S.L."/>
            <person name="Weinstock G.M."/>
        </authorList>
    </citation>
    <scope>NUCLEOTIDE SEQUENCE [LARGE SCALE GENOMIC DNA]</scope>
    <source>
        <strain>USA300 / TCH1516</strain>
    </source>
</reference>
<organism>
    <name type="scientific">Staphylococcus aureus (strain USA300 / TCH1516)</name>
    <dbReference type="NCBI Taxonomy" id="451516"/>
    <lineage>
        <taxon>Bacteria</taxon>
        <taxon>Bacillati</taxon>
        <taxon>Bacillota</taxon>
        <taxon>Bacilli</taxon>
        <taxon>Bacillales</taxon>
        <taxon>Staphylococcaceae</taxon>
        <taxon>Staphylococcus</taxon>
    </lineage>
</organism>
<accession>A8Z5H3</accession>
<proteinExistence type="inferred from homology"/>
<comment type="function">
    <text evidence="1">IGPS catalyzes the conversion of PRFAR and glutamine to IGP, AICAR and glutamate. The HisF subunit catalyzes the cyclization activity that produces IGP and AICAR from PRFAR using the ammonia provided by the HisH subunit.</text>
</comment>
<comment type="catalytic activity">
    <reaction evidence="1">
        <text>5-[(5-phospho-1-deoxy-D-ribulos-1-ylimino)methylamino]-1-(5-phospho-beta-D-ribosyl)imidazole-4-carboxamide + L-glutamine = D-erythro-1-(imidazol-4-yl)glycerol 3-phosphate + 5-amino-1-(5-phospho-beta-D-ribosyl)imidazole-4-carboxamide + L-glutamate + H(+)</text>
        <dbReference type="Rhea" id="RHEA:24793"/>
        <dbReference type="ChEBI" id="CHEBI:15378"/>
        <dbReference type="ChEBI" id="CHEBI:29985"/>
        <dbReference type="ChEBI" id="CHEBI:58278"/>
        <dbReference type="ChEBI" id="CHEBI:58359"/>
        <dbReference type="ChEBI" id="CHEBI:58475"/>
        <dbReference type="ChEBI" id="CHEBI:58525"/>
        <dbReference type="EC" id="4.3.2.10"/>
    </reaction>
</comment>
<comment type="pathway">
    <text evidence="1">Amino-acid biosynthesis; L-histidine biosynthesis; L-histidine from 5-phospho-alpha-D-ribose 1-diphosphate: step 5/9.</text>
</comment>
<comment type="subunit">
    <text evidence="1">Heterodimer of HisH and HisF.</text>
</comment>
<comment type="subcellular location">
    <subcellularLocation>
        <location evidence="1">Cytoplasm</location>
    </subcellularLocation>
</comment>
<comment type="similarity">
    <text evidence="1">Belongs to the HisA/HisF family.</text>
</comment>
<dbReference type="EC" id="4.3.2.10" evidence="1"/>
<dbReference type="EMBL" id="CP000730">
    <property type="protein sequence ID" value="ABX30660.1"/>
    <property type="molecule type" value="Genomic_DNA"/>
</dbReference>
<dbReference type="SMR" id="A8Z5H3"/>
<dbReference type="KEGG" id="sax:USA300HOU_2674"/>
<dbReference type="HOGENOM" id="CLU_048577_4_0_9"/>
<dbReference type="UniPathway" id="UPA00031">
    <property type="reaction ID" value="UER00010"/>
</dbReference>
<dbReference type="GO" id="GO:0005737">
    <property type="term" value="C:cytoplasm"/>
    <property type="evidence" value="ECO:0007669"/>
    <property type="project" value="UniProtKB-SubCell"/>
</dbReference>
<dbReference type="GO" id="GO:0000107">
    <property type="term" value="F:imidazoleglycerol-phosphate synthase activity"/>
    <property type="evidence" value="ECO:0007669"/>
    <property type="project" value="UniProtKB-UniRule"/>
</dbReference>
<dbReference type="GO" id="GO:0016829">
    <property type="term" value="F:lyase activity"/>
    <property type="evidence" value="ECO:0007669"/>
    <property type="project" value="UniProtKB-KW"/>
</dbReference>
<dbReference type="GO" id="GO:0000105">
    <property type="term" value="P:L-histidine biosynthetic process"/>
    <property type="evidence" value="ECO:0007669"/>
    <property type="project" value="UniProtKB-UniRule"/>
</dbReference>
<dbReference type="CDD" id="cd04731">
    <property type="entry name" value="HisF"/>
    <property type="match status" value="1"/>
</dbReference>
<dbReference type="FunFam" id="3.20.20.70:FF:000462">
    <property type="entry name" value="Multifunctional fusion protein"/>
    <property type="match status" value="1"/>
</dbReference>
<dbReference type="Gene3D" id="3.20.20.70">
    <property type="entry name" value="Aldolase class I"/>
    <property type="match status" value="1"/>
</dbReference>
<dbReference type="HAMAP" id="MF_01013">
    <property type="entry name" value="HisF"/>
    <property type="match status" value="1"/>
</dbReference>
<dbReference type="InterPro" id="IPR013785">
    <property type="entry name" value="Aldolase_TIM"/>
</dbReference>
<dbReference type="InterPro" id="IPR006062">
    <property type="entry name" value="His_biosynth"/>
</dbReference>
<dbReference type="InterPro" id="IPR004651">
    <property type="entry name" value="HisF"/>
</dbReference>
<dbReference type="InterPro" id="IPR050064">
    <property type="entry name" value="IGPS_HisA/HisF"/>
</dbReference>
<dbReference type="InterPro" id="IPR011060">
    <property type="entry name" value="RibuloseP-bd_barrel"/>
</dbReference>
<dbReference type="NCBIfam" id="TIGR00735">
    <property type="entry name" value="hisF"/>
    <property type="match status" value="1"/>
</dbReference>
<dbReference type="PANTHER" id="PTHR21235:SF2">
    <property type="entry name" value="IMIDAZOLE GLYCEROL PHOSPHATE SYNTHASE HISHF"/>
    <property type="match status" value="1"/>
</dbReference>
<dbReference type="PANTHER" id="PTHR21235">
    <property type="entry name" value="IMIDAZOLE GLYCEROL PHOSPHATE SYNTHASE SUBUNIT HISF/H IGP SYNTHASE SUBUNIT HISF/H"/>
    <property type="match status" value="1"/>
</dbReference>
<dbReference type="Pfam" id="PF00977">
    <property type="entry name" value="His_biosynth"/>
    <property type="match status" value="1"/>
</dbReference>
<dbReference type="SUPFAM" id="SSF51366">
    <property type="entry name" value="Ribulose-phoshate binding barrel"/>
    <property type="match status" value="1"/>
</dbReference>
<gene>
    <name evidence="1" type="primary">hisF</name>
    <name type="ordered locus">USA300HOU_2674</name>
</gene>
<protein>
    <recommendedName>
        <fullName evidence="1">Imidazole glycerol phosphate synthase subunit HisF</fullName>
        <ecNumber evidence="1">4.3.2.10</ecNumber>
    </recommendedName>
    <alternativeName>
        <fullName evidence="1">IGP synthase cyclase subunit</fullName>
    </alternativeName>
    <alternativeName>
        <fullName evidence="1">IGP synthase subunit HisF</fullName>
    </alternativeName>
    <alternativeName>
        <fullName evidence="1">ImGP synthase subunit HisF</fullName>
        <shortName evidence="1">IGPS subunit HisF</shortName>
    </alternativeName>
</protein>
<feature type="chain" id="PRO_1000084085" description="Imidazole glycerol phosphate synthase subunit HisF">
    <location>
        <begin position="1"/>
        <end position="252"/>
    </location>
</feature>
<feature type="active site" evidence="1">
    <location>
        <position position="11"/>
    </location>
</feature>
<feature type="active site" evidence="1">
    <location>
        <position position="130"/>
    </location>
</feature>
<keyword id="KW-0028">Amino-acid biosynthesis</keyword>
<keyword id="KW-0963">Cytoplasm</keyword>
<keyword id="KW-0368">Histidine biosynthesis</keyword>
<keyword id="KW-0456">Lyase</keyword>
<evidence type="ECO:0000255" key="1">
    <source>
        <dbReference type="HAMAP-Rule" id="MF_01013"/>
    </source>
</evidence>
<name>HIS6_STAAT</name>
<sequence>MIKKRIIPCLDVKDGRVVKGIQFKGLRDIGNPVDLAMYYNEAGADELVFLDISKTEEGHSLMLEVIEQTASRLFIPLTVGGGIQSLDDITQLLNHGADKVSLNSSALKNPQLIKQASDKFGRQCICIAIDSYYDPERKAHYCCTTGGKKMTNIKVYDWVQQVEQLGAGELLVTSMGHDGMKQGFDIEHLANIKSLVNIPIIASGGGGNAQHFVELFDQTDVSAGLAASILHDRETTVQSIKEVIRQGGIAVR</sequence>